<reference key="1">
    <citation type="journal article" date="2007" name="J. Bacteriol.">
        <title>The complete genome sequence of Roseobacter denitrificans reveals a mixotrophic rather than photosynthetic metabolism.</title>
        <authorList>
            <person name="Swingley W.D."/>
            <person name="Sadekar S."/>
            <person name="Mastrian S.D."/>
            <person name="Matthies H.J."/>
            <person name="Hao J."/>
            <person name="Ramos H."/>
            <person name="Acharya C.R."/>
            <person name="Conrad A.L."/>
            <person name="Taylor H.L."/>
            <person name="Dejesa L.C."/>
            <person name="Shah M.K."/>
            <person name="O'Huallachain M.E."/>
            <person name="Lince M.T."/>
            <person name="Blankenship R.E."/>
            <person name="Beatty J.T."/>
            <person name="Touchman J.W."/>
        </authorList>
    </citation>
    <scope>NUCLEOTIDE SEQUENCE [LARGE SCALE GENOMIC DNA]</scope>
    <source>
        <strain>ATCC 33942 / OCh 114</strain>
    </source>
</reference>
<comment type="function">
    <text evidence="1">The RuvA-RuvB-RuvC complex processes Holliday junction (HJ) DNA during genetic recombination and DNA repair, while the RuvA-RuvB complex plays an important role in the rescue of blocked DNA replication forks via replication fork reversal (RFR). RuvA specifically binds to HJ cruciform DNA, conferring on it an open structure. The RuvB hexamer acts as an ATP-dependent pump, pulling dsDNA into and through the RuvAB complex. RuvB forms 2 homohexamers on either side of HJ DNA bound by 1 or 2 RuvA tetramers; 4 subunits per hexamer contact DNA at a time. Coordinated motions by a converter formed by DNA-disengaged RuvB subunits stimulates ATP hydrolysis and nucleotide exchange. Immobilization of the converter enables RuvB to convert the ATP-contained energy into a lever motion, pulling 2 nucleotides of DNA out of the RuvA tetramer per ATP hydrolyzed, thus driving DNA branch migration. The RuvB motors rotate together with the DNA substrate, which together with the progressing nucleotide cycle form the mechanistic basis for DNA recombination by continuous HJ branch migration. Branch migration allows RuvC to scan DNA until it finds its consensus sequence, where it cleaves and resolves cruciform DNA.</text>
</comment>
<comment type="catalytic activity">
    <reaction evidence="1">
        <text>ATP + H2O = ADP + phosphate + H(+)</text>
        <dbReference type="Rhea" id="RHEA:13065"/>
        <dbReference type="ChEBI" id="CHEBI:15377"/>
        <dbReference type="ChEBI" id="CHEBI:15378"/>
        <dbReference type="ChEBI" id="CHEBI:30616"/>
        <dbReference type="ChEBI" id="CHEBI:43474"/>
        <dbReference type="ChEBI" id="CHEBI:456216"/>
    </reaction>
</comment>
<comment type="subunit">
    <text evidence="1">Homohexamer. Forms an RuvA(8)-RuvB(12)-Holliday junction (HJ) complex. HJ DNA is sandwiched between 2 RuvA tetramers; dsDNA enters through RuvA and exits via RuvB. An RuvB hexamer assembles on each DNA strand where it exits the tetramer. Each RuvB hexamer is contacted by two RuvA subunits (via domain III) on 2 adjacent RuvB subunits; this complex drives branch migration. In the full resolvosome a probable DNA-RuvA(4)-RuvB(12)-RuvC(2) complex forms which resolves the HJ.</text>
</comment>
<comment type="subcellular location">
    <subcellularLocation>
        <location evidence="1">Cytoplasm</location>
    </subcellularLocation>
</comment>
<comment type="domain">
    <text evidence="1">Has 3 domains, the large (RuvB-L) and small ATPase (RuvB-S) domains and the C-terminal head (RuvB-H) domain. The head domain binds DNA, while the ATPase domains jointly bind ATP, ADP or are empty depending on the state of the subunit in the translocation cycle. During a single DNA translocation step the structure of each domain remains the same, but their relative positions change.</text>
</comment>
<comment type="similarity">
    <text evidence="1">Belongs to the RuvB family.</text>
</comment>
<name>RUVB_ROSDO</name>
<gene>
    <name evidence="1" type="primary">ruvB</name>
    <name type="ordered locus">RD1_2090</name>
</gene>
<proteinExistence type="inferred from homology"/>
<dbReference type="EC" id="3.6.4.-" evidence="1"/>
<dbReference type="EMBL" id="CP000362">
    <property type="protein sequence ID" value="ABG31691.1"/>
    <property type="molecule type" value="Genomic_DNA"/>
</dbReference>
<dbReference type="RefSeq" id="WP_011568308.1">
    <property type="nucleotide sequence ID" value="NC_008209.1"/>
</dbReference>
<dbReference type="SMR" id="Q168A2"/>
<dbReference type="STRING" id="375451.RD1_2090"/>
<dbReference type="KEGG" id="rde:RD1_2090"/>
<dbReference type="eggNOG" id="COG2255">
    <property type="taxonomic scope" value="Bacteria"/>
</dbReference>
<dbReference type="HOGENOM" id="CLU_055599_1_0_5"/>
<dbReference type="OrthoDB" id="9804478at2"/>
<dbReference type="Proteomes" id="UP000007029">
    <property type="component" value="Chromosome"/>
</dbReference>
<dbReference type="GO" id="GO:0005737">
    <property type="term" value="C:cytoplasm"/>
    <property type="evidence" value="ECO:0007669"/>
    <property type="project" value="UniProtKB-SubCell"/>
</dbReference>
<dbReference type="GO" id="GO:0048476">
    <property type="term" value="C:Holliday junction resolvase complex"/>
    <property type="evidence" value="ECO:0007669"/>
    <property type="project" value="UniProtKB-UniRule"/>
</dbReference>
<dbReference type="GO" id="GO:0005524">
    <property type="term" value="F:ATP binding"/>
    <property type="evidence" value="ECO:0007669"/>
    <property type="project" value="UniProtKB-UniRule"/>
</dbReference>
<dbReference type="GO" id="GO:0016887">
    <property type="term" value="F:ATP hydrolysis activity"/>
    <property type="evidence" value="ECO:0007669"/>
    <property type="project" value="InterPro"/>
</dbReference>
<dbReference type="GO" id="GO:0000400">
    <property type="term" value="F:four-way junction DNA binding"/>
    <property type="evidence" value="ECO:0007669"/>
    <property type="project" value="UniProtKB-UniRule"/>
</dbReference>
<dbReference type="GO" id="GO:0009378">
    <property type="term" value="F:four-way junction helicase activity"/>
    <property type="evidence" value="ECO:0007669"/>
    <property type="project" value="InterPro"/>
</dbReference>
<dbReference type="GO" id="GO:0006310">
    <property type="term" value="P:DNA recombination"/>
    <property type="evidence" value="ECO:0007669"/>
    <property type="project" value="UniProtKB-UniRule"/>
</dbReference>
<dbReference type="GO" id="GO:0006281">
    <property type="term" value="P:DNA repair"/>
    <property type="evidence" value="ECO:0007669"/>
    <property type="project" value="UniProtKB-UniRule"/>
</dbReference>
<dbReference type="CDD" id="cd00009">
    <property type="entry name" value="AAA"/>
    <property type="match status" value="1"/>
</dbReference>
<dbReference type="Gene3D" id="1.10.8.60">
    <property type="match status" value="1"/>
</dbReference>
<dbReference type="Gene3D" id="3.40.50.300">
    <property type="entry name" value="P-loop containing nucleotide triphosphate hydrolases"/>
    <property type="match status" value="1"/>
</dbReference>
<dbReference type="Gene3D" id="1.10.10.10">
    <property type="entry name" value="Winged helix-like DNA-binding domain superfamily/Winged helix DNA-binding domain"/>
    <property type="match status" value="1"/>
</dbReference>
<dbReference type="HAMAP" id="MF_00016">
    <property type="entry name" value="DNA_HJ_migration_RuvB"/>
    <property type="match status" value="1"/>
</dbReference>
<dbReference type="InterPro" id="IPR003593">
    <property type="entry name" value="AAA+_ATPase"/>
</dbReference>
<dbReference type="InterPro" id="IPR041445">
    <property type="entry name" value="AAA_lid_4"/>
</dbReference>
<dbReference type="InterPro" id="IPR004605">
    <property type="entry name" value="DNA_helicase_Holl-junc_RuvB"/>
</dbReference>
<dbReference type="InterPro" id="IPR027417">
    <property type="entry name" value="P-loop_NTPase"/>
</dbReference>
<dbReference type="InterPro" id="IPR008824">
    <property type="entry name" value="RuvB-like_N"/>
</dbReference>
<dbReference type="InterPro" id="IPR008823">
    <property type="entry name" value="RuvB_C"/>
</dbReference>
<dbReference type="InterPro" id="IPR036388">
    <property type="entry name" value="WH-like_DNA-bd_sf"/>
</dbReference>
<dbReference type="InterPro" id="IPR036390">
    <property type="entry name" value="WH_DNA-bd_sf"/>
</dbReference>
<dbReference type="NCBIfam" id="NF000868">
    <property type="entry name" value="PRK00080.1"/>
    <property type="match status" value="1"/>
</dbReference>
<dbReference type="NCBIfam" id="TIGR00635">
    <property type="entry name" value="ruvB"/>
    <property type="match status" value="1"/>
</dbReference>
<dbReference type="PANTHER" id="PTHR42848">
    <property type="match status" value="1"/>
</dbReference>
<dbReference type="PANTHER" id="PTHR42848:SF1">
    <property type="entry name" value="HOLLIDAY JUNCTION BRANCH MIGRATION COMPLEX SUBUNIT RUVB"/>
    <property type="match status" value="1"/>
</dbReference>
<dbReference type="Pfam" id="PF17864">
    <property type="entry name" value="AAA_lid_4"/>
    <property type="match status" value="1"/>
</dbReference>
<dbReference type="Pfam" id="PF05491">
    <property type="entry name" value="RuvB_C"/>
    <property type="match status" value="1"/>
</dbReference>
<dbReference type="Pfam" id="PF05496">
    <property type="entry name" value="RuvB_N"/>
    <property type="match status" value="1"/>
</dbReference>
<dbReference type="SMART" id="SM00382">
    <property type="entry name" value="AAA"/>
    <property type="match status" value="1"/>
</dbReference>
<dbReference type="SUPFAM" id="SSF52540">
    <property type="entry name" value="P-loop containing nucleoside triphosphate hydrolases"/>
    <property type="match status" value="1"/>
</dbReference>
<dbReference type="SUPFAM" id="SSF46785">
    <property type="entry name" value="Winged helix' DNA-binding domain"/>
    <property type="match status" value="1"/>
</dbReference>
<organism>
    <name type="scientific">Roseobacter denitrificans (strain ATCC 33942 / OCh 114)</name>
    <name type="common">Erythrobacter sp. (strain OCh 114)</name>
    <name type="synonym">Roseobacter denitrificans</name>
    <dbReference type="NCBI Taxonomy" id="375451"/>
    <lineage>
        <taxon>Bacteria</taxon>
        <taxon>Pseudomonadati</taxon>
        <taxon>Pseudomonadota</taxon>
        <taxon>Alphaproteobacteria</taxon>
        <taxon>Rhodobacterales</taxon>
        <taxon>Roseobacteraceae</taxon>
        <taxon>Roseobacter</taxon>
    </lineage>
</organism>
<evidence type="ECO:0000255" key="1">
    <source>
        <dbReference type="HAMAP-Rule" id="MF_00016"/>
    </source>
</evidence>
<accession>Q168A2</accession>
<keyword id="KW-0067">ATP-binding</keyword>
<keyword id="KW-0963">Cytoplasm</keyword>
<keyword id="KW-0227">DNA damage</keyword>
<keyword id="KW-0233">DNA recombination</keyword>
<keyword id="KW-0234">DNA repair</keyword>
<keyword id="KW-0238">DNA-binding</keyword>
<keyword id="KW-0378">Hydrolase</keyword>
<keyword id="KW-0547">Nucleotide-binding</keyword>
<keyword id="KW-1185">Reference proteome</keyword>
<protein>
    <recommendedName>
        <fullName evidence="1">Holliday junction branch migration complex subunit RuvB</fullName>
        <ecNumber evidence="1">3.6.4.-</ecNumber>
    </recommendedName>
</protein>
<feature type="chain" id="PRO_1000001466" description="Holliday junction branch migration complex subunit RuvB">
    <location>
        <begin position="1"/>
        <end position="340"/>
    </location>
</feature>
<feature type="region of interest" description="Large ATPase domain (RuvB-L)" evidence="1">
    <location>
        <begin position="1"/>
        <end position="182"/>
    </location>
</feature>
<feature type="region of interest" description="Small ATPAse domain (RuvB-S)" evidence="1">
    <location>
        <begin position="183"/>
        <end position="253"/>
    </location>
</feature>
<feature type="region of interest" description="Head domain (RuvB-H)" evidence="1">
    <location>
        <begin position="256"/>
        <end position="340"/>
    </location>
</feature>
<feature type="binding site" evidence="1">
    <location>
        <position position="21"/>
    </location>
    <ligand>
        <name>ATP</name>
        <dbReference type="ChEBI" id="CHEBI:30616"/>
    </ligand>
</feature>
<feature type="binding site" evidence="1">
    <location>
        <position position="22"/>
    </location>
    <ligand>
        <name>ATP</name>
        <dbReference type="ChEBI" id="CHEBI:30616"/>
    </ligand>
</feature>
<feature type="binding site" evidence="1">
    <location>
        <position position="63"/>
    </location>
    <ligand>
        <name>ATP</name>
        <dbReference type="ChEBI" id="CHEBI:30616"/>
    </ligand>
</feature>
<feature type="binding site" evidence="1">
    <location>
        <position position="66"/>
    </location>
    <ligand>
        <name>ATP</name>
        <dbReference type="ChEBI" id="CHEBI:30616"/>
    </ligand>
</feature>
<feature type="binding site" evidence="1">
    <location>
        <position position="67"/>
    </location>
    <ligand>
        <name>ATP</name>
        <dbReference type="ChEBI" id="CHEBI:30616"/>
    </ligand>
</feature>
<feature type="binding site" evidence="1">
    <location>
        <position position="67"/>
    </location>
    <ligand>
        <name>Mg(2+)</name>
        <dbReference type="ChEBI" id="CHEBI:18420"/>
    </ligand>
</feature>
<feature type="binding site" evidence="1">
    <location>
        <position position="68"/>
    </location>
    <ligand>
        <name>ATP</name>
        <dbReference type="ChEBI" id="CHEBI:30616"/>
    </ligand>
</feature>
<feature type="binding site" evidence="1">
    <location>
        <begin position="129"/>
        <end position="131"/>
    </location>
    <ligand>
        <name>ATP</name>
        <dbReference type="ChEBI" id="CHEBI:30616"/>
    </ligand>
</feature>
<feature type="binding site" evidence="1">
    <location>
        <position position="172"/>
    </location>
    <ligand>
        <name>ATP</name>
        <dbReference type="ChEBI" id="CHEBI:30616"/>
    </ligand>
</feature>
<feature type="binding site" evidence="1">
    <location>
        <position position="182"/>
    </location>
    <ligand>
        <name>ATP</name>
        <dbReference type="ChEBI" id="CHEBI:30616"/>
    </ligand>
</feature>
<feature type="binding site" evidence="1">
    <location>
        <position position="219"/>
    </location>
    <ligand>
        <name>ATP</name>
        <dbReference type="ChEBI" id="CHEBI:30616"/>
    </ligand>
</feature>
<feature type="binding site" evidence="1">
    <location>
        <position position="292"/>
    </location>
    <ligand>
        <name>DNA</name>
        <dbReference type="ChEBI" id="CHEBI:16991"/>
    </ligand>
</feature>
<feature type="binding site" evidence="1">
    <location>
        <position position="311"/>
    </location>
    <ligand>
        <name>DNA</name>
        <dbReference type="ChEBI" id="CHEBI:16991"/>
    </ligand>
</feature>
<feature type="binding site" evidence="1">
    <location>
        <position position="316"/>
    </location>
    <ligand>
        <name>DNA</name>
        <dbReference type="ChEBI" id="CHEBI:16991"/>
    </ligand>
</feature>
<sequence length="340" mass="37352">MSDIDPTVRADPLPEDHDRALRPQMLSEFVGQAEARANLKVFIASARQRGEAMDHTLFHGPPGLGKTTLAQIMARELGVGFRMTSGPVLAKAGDLAAILTNLEKRDVLFIDEIHRLNPAVEEVLYPALEDFELDLVIGEGPAARTVRIELQPFTLVGATTRMGLLTTPLRDRFGIPTRLQFYTEDELFIIVDRNARKLGAPADEGGAREIARRARGTPRIAGRLLRRVVDFAVVEGDGRVTRALADMALNRLGVDHLGLDGADRRYLRLIAENYGGGPVGIETMSAALSESRDALEEVIEPFLLQQGLIQRTPRGRMLAQKGWTHLGLDAPRAQTDLFEG</sequence>